<feature type="chain" id="PRO_1000083482" description="Protein SprT">
    <location>
        <begin position="1"/>
        <end position="165"/>
    </location>
</feature>
<feature type="domain" description="SprT-like" evidence="1">
    <location>
        <begin position="20"/>
        <end position="163"/>
    </location>
</feature>
<feature type="active site" evidence="1">
    <location>
        <position position="79"/>
    </location>
</feature>
<feature type="binding site" evidence="1">
    <location>
        <position position="78"/>
    </location>
    <ligand>
        <name>Zn(2+)</name>
        <dbReference type="ChEBI" id="CHEBI:29105"/>
    </ligand>
</feature>
<feature type="binding site" evidence="1">
    <location>
        <position position="82"/>
    </location>
    <ligand>
        <name>Zn(2+)</name>
        <dbReference type="ChEBI" id="CHEBI:29105"/>
    </ligand>
</feature>
<name>SPRT_SALAR</name>
<keyword id="KW-0963">Cytoplasm</keyword>
<keyword id="KW-0479">Metal-binding</keyword>
<keyword id="KW-1185">Reference proteome</keyword>
<keyword id="KW-0862">Zinc</keyword>
<reference key="1">
    <citation type="submission" date="2007-11" db="EMBL/GenBank/DDBJ databases">
        <authorList>
            <consortium name="The Salmonella enterica serovar Arizonae Genome Sequencing Project"/>
            <person name="McClelland M."/>
            <person name="Sanderson E.K."/>
            <person name="Porwollik S."/>
            <person name="Spieth J."/>
            <person name="Clifton W.S."/>
            <person name="Fulton R."/>
            <person name="Chunyan W."/>
            <person name="Wollam A."/>
            <person name="Shah N."/>
            <person name="Pepin K."/>
            <person name="Bhonagiri V."/>
            <person name="Nash W."/>
            <person name="Johnson M."/>
            <person name="Thiruvilangam P."/>
            <person name="Wilson R."/>
        </authorList>
    </citation>
    <scope>NUCLEOTIDE SEQUENCE [LARGE SCALE GENOMIC DNA]</scope>
    <source>
        <strain>ATCC BAA-731 / CDC346-86 / RSK2980</strain>
    </source>
</reference>
<dbReference type="EMBL" id="CP000880">
    <property type="protein sequence ID" value="ABX24326.1"/>
    <property type="molecule type" value="Genomic_DNA"/>
</dbReference>
<dbReference type="STRING" id="41514.SARI_04553"/>
<dbReference type="KEGG" id="ses:SARI_04553"/>
<dbReference type="HOGENOM" id="CLU_113336_0_1_6"/>
<dbReference type="Proteomes" id="UP000002084">
    <property type="component" value="Chromosome"/>
</dbReference>
<dbReference type="GO" id="GO:0005737">
    <property type="term" value="C:cytoplasm"/>
    <property type="evidence" value="ECO:0007669"/>
    <property type="project" value="UniProtKB-SubCell"/>
</dbReference>
<dbReference type="GO" id="GO:0008270">
    <property type="term" value="F:zinc ion binding"/>
    <property type="evidence" value="ECO:0007669"/>
    <property type="project" value="UniProtKB-UniRule"/>
</dbReference>
<dbReference type="GO" id="GO:0006950">
    <property type="term" value="P:response to stress"/>
    <property type="evidence" value="ECO:0007669"/>
    <property type="project" value="UniProtKB-ARBA"/>
</dbReference>
<dbReference type="HAMAP" id="MF_00746">
    <property type="entry name" value="SprT"/>
    <property type="match status" value="1"/>
</dbReference>
<dbReference type="InterPro" id="IPR006640">
    <property type="entry name" value="SprT-like_domain"/>
</dbReference>
<dbReference type="InterPro" id="IPR035240">
    <property type="entry name" value="SprT_Zn_ribbon"/>
</dbReference>
<dbReference type="InterPro" id="IPR023483">
    <property type="entry name" value="Uncharacterised_SprT"/>
</dbReference>
<dbReference type="NCBIfam" id="NF003421">
    <property type="entry name" value="PRK04860.1"/>
    <property type="match status" value="1"/>
</dbReference>
<dbReference type="PANTHER" id="PTHR38773">
    <property type="entry name" value="PROTEIN SPRT"/>
    <property type="match status" value="1"/>
</dbReference>
<dbReference type="PANTHER" id="PTHR38773:SF1">
    <property type="entry name" value="PROTEIN SPRT"/>
    <property type="match status" value="1"/>
</dbReference>
<dbReference type="Pfam" id="PF10263">
    <property type="entry name" value="SprT-like"/>
    <property type="match status" value="1"/>
</dbReference>
<dbReference type="Pfam" id="PF17283">
    <property type="entry name" value="Zn_ribbon_SprT"/>
    <property type="match status" value="1"/>
</dbReference>
<dbReference type="SMART" id="SM00731">
    <property type="entry name" value="SprT"/>
    <property type="match status" value="1"/>
</dbReference>
<dbReference type="PROSITE" id="PS00142">
    <property type="entry name" value="ZINC_PROTEASE"/>
    <property type="match status" value="1"/>
</dbReference>
<organism>
    <name type="scientific">Salmonella arizonae (strain ATCC BAA-731 / CDC346-86 / RSK2980)</name>
    <dbReference type="NCBI Taxonomy" id="41514"/>
    <lineage>
        <taxon>Bacteria</taxon>
        <taxon>Pseudomonadati</taxon>
        <taxon>Pseudomonadota</taxon>
        <taxon>Gammaproteobacteria</taxon>
        <taxon>Enterobacterales</taxon>
        <taxon>Enterobacteriaceae</taxon>
        <taxon>Salmonella</taxon>
    </lineage>
</organism>
<comment type="cofactor">
    <cofactor evidence="1">
        <name>Zn(2+)</name>
        <dbReference type="ChEBI" id="CHEBI:29105"/>
    </cofactor>
    <text evidence="1">Binds 1 zinc ion.</text>
</comment>
<comment type="subcellular location">
    <subcellularLocation>
        <location evidence="1">Cytoplasm</location>
    </subcellularLocation>
</comment>
<comment type="similarity">
    <text evidence="1">Belongs to the SprT family.</text>
</comment>
<protein>
    <recommendedName>
        <fullName evidence="1">Protein SprT</fullName>
    </recommendedName>
</protein>
<gene>
    <name evidence="1" type="primary">sprT</name>
    <name type="ordered locus">SARI_04553</name>
</gene>
<accession>A9MRC8</accession>
<evidence type="ECO:0000255" key="1">
    <source>
        <dbReference type="HAMAP-Rule" id="MF_00746"/>
    </source>
</evidence>
<proteinExistence type="inferred from homology"/>
<sequence length="165" mass="19274">MKTPRLPIAIQQAVMRRLRENLAQANLKLNRHYPEPKLVYTQRGTSAGTAWLESYEIRLNPVLLMENVDAFIAEVVPHELAHLLVWKHFGRKAPHGKEWKWMMESVLGVPARRTHQFELQSVRRNTFPYHCQCQQHQLTVRRHNRVVRGEAVYRCVHCGEPLVAG</sequence>